<keyword id="KW-1035">Host cytoplasm</keyword>
<keyword id="KW-1048">Host nucleus</keyword>
<keyword id="KW-0426">Late protein</keyword>
<keyword id="KW-1185">Reference proteome</keyword>
<keyword id="KW-0946">Virion</keyword>
<keyword id="KW-0920">Virion tegument</keyword>
<organismHost>
    <name type="scientific">Amazona oratrix</name>
    <name type="common">yellow-headed parrot</name>
    <dbReference type="NCBI Taxonomy" id="152276"/>
</organismHost>
<protein>
    <recommendedName>
        <fullName evidence="1">Cytoplasmic envelopment protein 2</fullName>
    </recommendedName>
</protein>
<gene>
    <name type="primary">UL16</name>
</gene>
<feature type="chain" id="PRO_0000406845" description="Cytoplasmic envelopment protein 2">
    <location>
        <begin position="1"/>
        <end position="355"/>
    </location>
</feature>
<reference key="1">
    <citation type="journal article" date="2006" name="J. Virol.">
        <title>Psittacid herpesvirus 1 and infectious laryngotracheitis virus: Comparative genome sequence analysis of two avian alphaherpesviruses.</title>
        <authorList>
            <person name="Thureen D.R."/>
            <person name="Keeler C.L. Jr."/>
        </authorList>
    </citation>
    <scope>NUCLEOTIDE SEQUENCE [LARGE SCALE GENOMIC DNA]</scope>
</reference>
<dbReference type="EMBL" id="AY372243">
    <property type="protein sequence ID" value="AAQ73730.1"/>
    <property type="molecule type" value="Genomic_DNA"/>
</dbReference>
<dbReference type="RefSeq" id="NP_944424.1">
    <property type="nucleotide sequence ID" value="NC_005264.1"/>
</dbReference>
<dbReference type="GeneID" id="2657009"/>
<dbReference type="KEGG" id="vg:2657009"/>
<dbReference type="Proteomes" id="UP000006840">
    <property type="component" value="Segment"/>
</dbReference>
<dbReference type="GO" id="GO:0030430">
    <property type="term" value="C:host cell cytoplasm"/>
    <property type="evidence" value="ECO:0007669"/>
    <property type="project" value="UniProtKB-SubCell"/>
</dbReference>
<dbReference type="GO" id="GO:0042025">
    <property type="term" value="C:host cell nucleus"/>
    <property type="evidence" value="ECO:0007669"/>
    <property type="project" value="UniProtKB-SubCell"/>
</dbReference>
<dbReference type="GO" id="GO:0019033">
    <property type="term" value="C:viral tegument"/>
    <property type="evidence" value="ECO:0007669"/>
    <property type="project" value="UniProtKB-SubCell"/>
</dbReference>
<dbReference type="HAMAP" id="MF_04039">
    <property type="entry name" value="HSV_CEP2"/>
    <property type="match status" value="1"/>
</dbReference>
<dbReference type="InterPro" id="IPR004286">
    <property type="entry name" value="Herpes_UL16/UL94"/>
</dbReference>
<dbReference type="Pfam" id="PF03044">
    <property type="entry name" value="Herpes_UL16"/>
    <property type="match status" value="1"/>
</dbReference>
<name>CEP2_PSHV1</name>
<evidence type="ECO:0000255" key="1">
    <source>
        <dbReference type="HAMAP-Rule" id="MF_04039"/>
    </source>
</evidence>
<proteinExistence type="inferred from homology"/>
<organism>
    <name type="scientific">Psittacid herpesvirus 1 (isolate Amazon parrot/-/97-0001/1997)</name>
    <name type="common">PsHV-1</name>
    <name type="synonym">Pacheco's disease virus</name>
    <dbReference type="NCBI Taxonomy" id="670426"/>
    <lineage>
        <taxon>Viruses</taxon>
        <taxon>Duplodnaviria</taxon>
        <taxon>Heunggongvirae</taxon>
        <taxon>Peploviricota</taxon>
        <taxon>Herviviricetes</taxon>
        <taxon>Herpesvirales</taxon>
        <taxon>Orthoherpesviridae</taxon>
        <taxon>Alphaherpesvirinae</taxon>
        <taxon>Iltovirus</taxon>
        <taxon>Iltovirus psittacidalpha1</taxon>
        <taxon>Psittacid alphaherpesvirus 1</taxon>
    </lineage>
</organism>
<accession>Q6UDI0</accession>
<sequence>MRVSVSKIGTSCAERLLNDVNVWARVRNDPLLTILTAKMPLRKEYRRWFDGIEEDKPAAGADTSSLRIYLYLTKPKRSRGGRRNVHITAVVNGAHAFCLLSRMGAEKSPLGGETFCIRVSKSKLCPTPLEDLPDPRNEPVPSQILPADYTSLTSKAIPPLDPEWCVCLSPGAWWHYPTETVFFFHLKDIMKSICPAGWNSMTFCAILTAFLDPKPRNCDLRRDTRRRHVDQFGNTDGPGAELFCPCKVPCHNEDGPRRTPLRPRGEQNLLKLLFVGHVETVTQLQHACEPGYIPGDVSRVIRGNGADGRRVPPNCQAWDLLKFTQFASRSLLCGCPEMRRIVDDAADSSWLRSGE</sequence>
<comment type="function">
    <text evidence="1">Plays a critical role in cytoplasmic virus egress. Participates in the final step of tegumentation and envelope acquisition within the host cytoplasm by directly interacting with the capsid. Upon virion binding to target cell, a signaling cascade is triggered to disrupt the interaction with the capsid, thereby preparing capsid uncoating.</text>
</comment>
<comment type="subunit">
    <text evidence="1">Interacts with cytoplasmic envelopment protein 3 and with the capsid.</text>
</comment>
<comment type="subcellular location">
    <subcellularLocation>
        <location evidence="1">Virion tegument</location>
    </subcellularLocation>
    <subcellularLocation>
        <location evidence="1">Host cytoplasm</location>
    </subcellularLocation>
    <subcellularLocation>
        <location evidence="1">Host nucleus</location>
    </subcellularLocation>
    <text evidence="1">Localizes in the host nucleus up to 18 hours postinfection, but at later times localizes to punctate, cytoplasmic structures.</text>
</comment>
<comment type="similarity">
    <text evidence="1">Belongs to the herpesviridae cytoplasmic envelopment protein 2 family.</text>
</comment>